<dbReference type="EC" id="2.7.11.1"/>
<dbReference type="EC" id="2.7.10.2"/>
<dbReference type="EMBL" id="BC102829">
    <property type="protein sequence ID" value="AAI02830.1"/>
    <property type="molecule type" value="mRNA"/>
</dbReference>
<dbReference type="RefSeq" id="NP_001029782.1">
    <property type="nucleotide sequence ID" value="NM_001034610.2"/>
</dbReference>
<dbReference type="SMR" id="Q3SZJ2"/>
<dbReference type="FunCoup" id="Q3SZJ2">
    <property type="interactions" value="388"/>
</dbReference>
<dbReference type="STRING" id="9913.ENSBTAP00000020312"/>
<dbReference type="PaxDb" id="9913-ENSBTAP00000054150"/>
<dbReference type="Ensembl" id="ENSBTAT00000020312.4">
    <property type="protein sequence ID" value="ENSBTAP00000020312.2"/>
    <property type="gene ID" value="ENSBTAG00000015271.5"/>
</dbReference>
<dbReference type="GeneID" id="534407"/>
<dbReference type="KEGG" id="bta:534407"/>
<dbReference type="CTD" id="8767"/>
<dbReference type="VEuPathDB" id="HostDB:ENSBTAG00000015271"/>
<dbReference type="VGNC" id="VGNC:33982">
    <property type="gene designation" value="RIPK2"/>
</dbReference>
<dbReference type="eggNOG" id="KOG0192">
    <property type="taxonomic scope" value="Eukaryota"/>
</dbReference>
<dbReference type="GeneTree" id="ENSGT00940000156113"/>
<dbReference type="HOGENOM" id="CLU_000288_7_35_1"/>
<dbReference type="InParanoid" id="Q3SZJ2"/>
<dbReference type="OMA" id="MDIPHRV"/>
<dbReference type="OrthoDB" id="339325at2759"/>
<dbReference type="Reactome" id="R-BTA-168638">
    <property type="pathway name" value="NOD1/2 Signaling Pathway"/>
</dbReference>
<dbReference type="Reactome" id="R-BTA-202424">
    <property type="pathway name" value="Downstream TCR signaling"/>
</dbReference>
<dbReference type="Reactome" id="R-BTA-209543">
    <property type="pathway name" value="p75NTR recruits signalling complexes"/>
</dbReference>
<dbReference type="Reactome" id="R-BTA-450302">
    <property type="pathway name" value="activated TAK1 mediates p38 MAPK activation"/>
</dbReference>
<dbReference type="Reactome" id="R-BTA-450321">
    <property type="pathway name" value="JNK (c-Jun kinases) phosphorylation and activation mediated by activated human TAK1"/>
</dbReference>
<dbReference type="Reactome" id="R-BTA-5689896">
    <property type="pathway name" value="Ovarian tumor domain proteases"/>
</dbReference>
<dbReference type="Proteomes" id="UP000009136">
    <property type="component" value="Chromosome 14"/>
</dbReference>
<dbReference type="Bgee" id="ENSBTAG00000015271">
    <property type="expression patterns" value="Expressed in spermatid and 103 other cell types or tissues"/>
</dbReference>
<dbReference type="GO" id="GO:0005737">
    <property type="term" value="C:cytoplasm"/>
    <property type="evidence" value="ECO:0000250"/>
    <property type="project" value="UniProtKB"/>
</dbReference>
<dbReference type="GO" id="GO:0005856">
    <property type="term" value="C:cytoskeleton"/>
    <property type="evidence" value="ECO:0000250"/>
    <property type="project" value="UniProtKB"/>
</dbReference>
<dbReference type="GO" id="GO:0005829">
    <property type="term" value="C:cytosol"/>
    <property type="evidence" value="ECO:0007669"/>
    <property type="project" value="Ensembl"/>
</dbReference>
<dbReference type="GO" id="GO:0005783">
    <property type="term" value="C:endoplasmic reticulum"/>
    <property type="evidence" value="ECO:0007669"/>
    <property type="project" value="UniProtKB-SubCell"/>
</dbReference>
<dbReference type="GO" id="GO:0005886">
    <property type="term" value="C:plasma membrane"/>
    <property type="evidence" value="ECO:0000250"/>
    <property type="project" value="UniProtKB"/>
</dbReference>
<dbReference type="GO" id="GO:0032991">
    <property type="term" value="C:protein-containing complex"/>
    <property type="evidence" value="ECO:0000250"/>
    <property type="project" value="UniProtKB"/>
</dbReference>
<dbReference type="GO" id="GO:0031982">
    <property type="term" value="C:vesicle"/>
    <property type="evidence" value="ECO:0000250"/>
    <property type="project" value="UniProtKB"/>
</dbReference>
<dbReference type="GO" id="GO:0005524">
    <property type="term" value="F:ATP binding"/>
    <property type="evidence" value="ECO:0007669"/>
    <property type="project" value="UniProtKB-KW"/>
</dbReference>
<dbReference type="GO" id="GO:0050700">
    <property type="term" value="F:CARD domain binding"/>
    <property type="evidence" value="ECO:0007669"/>
    <property type="project" value="Ensembl"/>
</dbReference>
<dbReference type="GO" id="GO:0089720">
    <property type="term" value="F:caspase binding"/>
    <property type="evidence" value="ECO:0007669"/>
    <property type="project" value="Ensembl"/>
</dbReference>
<dbReference type="GO" id="GO:0004706">
    <property type="term" value="F:JUN kinase kinase kinase activity"/>
    <property type="evidence" value="ECO:0000318"/>
    <property type="project" value="GO_Central"/>
</dbReference>
<dbReference type="GO" id="GO:0030274">
    <property type="term" value="F:LIM domain binding"/>
    <property type="evidence" value="ECO:0007669"/>
    <property type="project" value="Ensembl"/>
</dbReference>
<dbReference type="GO" id="GO:0004715">
    <property type="term" value="F:non-membrane spanning protein tyrosine kinase activity"/>
    <property type="evidence" value="ECO:0007669"/>
    <property type="project" value="UniProtKB-EC"/>
</dbReference>
<dbReference type="GO" id="GO:0042803">
    <property type="term" value="F:protein homodimerization activity"/>
    <property type="evidence" value="ECO:0007669"/>
    <property type="project" value="Ensembl"/>
</dbReference>
<dbReference type="GO" id="GO:0106310">
    <property type="term" value="F:protein serine kinase activity"/>
    <property type="evidence" value="ECO:0007669"/>
    <property type="project" value="RHEA"/>
</dbReference>
<dbReference type="GO" id="GO:0004674">
    <property type="term" value="F:protein serine/threonine kinase activity"/>
    <property type="evidence" value="ECO:0000250"/>
    <property type="project" value="UniProtKB"/>
</dbReference>
<dbReference type="GO" id="GO:0035591">
    <property type="term" value="F:signaling adaptor activity"/>
    <property type="evidence" value="ECO:0000250"/>
    <property type="project" value="UniProtKB"/>
</dbReference>
<dbReference type="GO" id="GO:0005102">
    <property type="term" value="F:signaling receptor binding"/>
    <property type="evidence" value="ECO:0007669"/>
    <property type="project" value="Ensembl"/>
</dbReference>
<dbReference type="GO" id="GO:0002250">
    <property type="term" value="P:adaptive immune response"/>
    <property type="evidence" value="ECO:0000250"/>
    <property type="project" value="UniProtKB"/>
</dbReference>
<dbReference type="GO" id="GO:0006915">
    <property type="term" value="P:apoptotic process"/>
    <property type="evidence" value="ECO:0007669"/>
    <property type="project" value="UniProtKB-KW"/>
</dbReference>
<dbReference type="GO" id="GO:0007249">
    <property type="term" value="P:canonical NF-kappaB signal transduction"/>
    <property type="evidence" value="ECO:0000250"/>
    <property type="project" value="UniProtKB"/>
</dbReference>
<dbReference type="GO" id="GO:0035739">
    <property type="term" value="P:CD4-positive, alpha-beta T cell proliferation"/>
    <property type="evidence" value="ECO:0007669"/>
    <property type="project" value="Ensembl"/>
</dbReference>
<dbReference type="GO" id="GO:0071223">
    <property type="term" value="P:cellular response to lipoteichoic acid"/>
    <property type="evidence" value="ECO:0007669"/>
    <property type="project" value="Ensembl"/>
</dbReference>
<dbReference type="GO" id="GO:0071225">
    <property type="term" value="P:cellular response to muramyl dipeptide"/>
    <property type="evidence" value="ECO:0000250"/>
    <property type="project" value="UniProtKB"/>
</dbReference>
<dbReference type="GO" id="GO:0071224">
    <property type="term" value="P:cellular response to peptidoglycan"/>
    <property type="evidence" value="ECO:0007669"/>
    <property type="project" value="Ensembl"/>
</dbReference>
<dbReference type="GO" id="GO:0019221">
    <property type="term" value="P:cytokine-mediated signaling pathway"/>
    <property type="evidence" value="ECO:0007669"/>
    <property type="project" value="Ensembl"/>
</dbReference>
<dbReference type="GO" id="GO:0050830">
    <property type="term" value="P:defense response to Gram-positive bacterium"/>
    <property type="evidence" value="ECO:0007669"/>
    <property type="project" value="Ensembl"/>
</dbReference>
<dbReference type="GO" id="GO:0070371">
    <property type="term" value="P:ERK1 and ERK2 cascade"/>
    <property type="evidence" value="ECO:0000318"/>
    <property type="project" value="GO_Central"/>
</dbReference>
<dbReference type="GO" id="GO:0033080">
    <property type="term" value="P:immature T cell proliferation in thymus"/>
    <property type="evidence" value="ECO:0007669"/>
    <property type="project" value="Ensembl"/>
</dbReference>
<dbReference type="GO" id="GO:0045087">
    <property type="term" value="P:innate immune response"/>
    <property type="evidence" value="ECO:0000250"/>
    <property type="project" value="UniProtKB"/>
</dbReference>
<dbReference type="GO" id="GO:0007254">
    <property type="term" value="P:JNK cascade"/>
    <property type="evidence" value="ECO:0000318"/>
    <property type="project" value="GO_Central"/>
</dbReference>
<dbReference type="GO" id="GO:0031663">
    <property type="term" value="P:lipopolysaccharide-mediated signaling pathway"/>
    <property type="evidence" value="ECO:0007669"/>
    <property type="project" value="Ensembl"/>
</dbReference>
<dbReference type="GO" id="GO:0070427">
    <property type="term" value="P:nucleotide-binding oligomerization domain containing 1 signaling pathway"/>
    <property type="evidence" value="ECO:0007669"/>
    <property type="project" value="Ensembl"/>
</dbReference>
<dbReference type="GO" id="GO:0070431">
    <property type="term" value="P:nucleotide-binding oligomerization domain containing 2 signaling pathway"/>
    <property type="evidence" value="ECO:0000250"/>
    <property type="project" value="UniProtKB"/>
</dbReference>
<dbReference type="GO" id="GO:0043065">
    <property type="term" value="P:positive regulation of apoptotic process"/>
    <property type="evidence" value="ECO:0007669"/>
    <property type="project" value="Ensembl"/>
</dbReference>
<dbReference type="GO" id="GO:0043123">
    <property type="term" value="P:positive regulation of canonical NF-kappaB signal transduction"/>
    <property type="evidence" value="ECO:0000318"/>
    <property type="project" value="GO_Central"/>
</dbReference>
<dbReference type="GO" id="GO:2000563">
    <property type="term" value="P:positive regulation of CD4-positive, alpha-beta T cell proliferation"/>
    <property type="evidence" value="ECO:0007669"/>
    <property type="project" value="Ensembl"/>
</dbReference>
<dbReference type="GO" id="GO:0032722">
    <property type="term" value="P:positive regulation of chemokine production"/>
    <property type="evidence" value="ECO:0007669"/>
    <property type="project" value="Ensembl"/>
</dbReference>
<dbReference type="GO" id="GO:0001961">
    <property type="term" value="P:positive regulation of cytokine-mediated signaling pathway"/>
    <property type="evidence" value="ECO:0007669"/>
    <property type="project" value="Ensembl"/>
</dbReference>
<dbReference type="GO" id="GO:0070374">
    <property type="term" value="P:positive regulation of ERK1 and ERK2 cascade"/>
    <property type="evidence" value="ECO:0007669"/>
    <property type="project" value="Ensembl"/>
</dbReference>
<dbReference type="GO" id="GO:0033092">
    <property type="term" value="P:positive regulation of immature T cell proliferation in thymus"/>
    <property type="evidence" value="ECO:0007669"/>
    <property type="project" value="Ensembl"/>
</dbReference>
<dbReference type="GO" id="GO:0032731">
    <property type="term" value="P:positive regulation of interleukin-1 beta production"/>
    <property type="evidence" value="ECO:0007669"/>
    <property type="project" value="Ensembl"/>
</dbReference>
<dbReference type="GO" id="GO:0032743">
    <property type="term" value="P:positive regulation of interleukin-2 production"/>
    <property type="evidence" value="ECO:0007669"/>
    <property type="project" value="Ensembl"/>
</dbReference>
<dbReference type="GO" id="GO:0032755">
    <property type="term" value="P:positive regulation of interleukin-6 production"/>
    <property type="evidence" value="ECO:0000250"/>
    <property type="project" value="UniProtKB"/>
</dbReference>
<dbReference type="GO" id="GO:0046330">
    <property type="term" value="P:positive regulation of JNK cascade"/>
    <property type="evidence" value="ECO:0007669"/>
    <property type="project" value="Ensembl"/>
</dbReference>
<dbReference type="GO" id="GO:0060907">
    <property type="term" value="P:positive regulation of macrophage cytokine production"/>
    <property type="evidence" value="ECO:0007669"/>
    <property type="project" value="Ensembl"/>
</dbReference>
<dbReference type="GO" id="GO:0051092">
    <property type="term" value="P:positive regulation of NF-kappaB transcription factor activity"/>
    <property type="evidence" value="ECO:0000250"/>
    <property type="project" value="UniProtKB"/>
</dbReference>
<dbReference type="GO" id="GO:0050731">
    <property type="term" value="P:positive regulation of peptidyl-tyrosine phosphorylation"/>
    <property type="evidence" value="ECO:0000250"/>
    <property type="project" value="UniProtKB"/>
</dbReference>
<dbReference type="GO" id="GO:1902523">
    <property type="term" value="P:positive regulation of protein K63-linked ubiquitination"/>
    <property type="evidence" value="ECO:0000250"/>
    <property type="project" value="UniProtKB"/>
</dbReference>
<dbReference type="GO" id="GO:0032874">
    <property type="term" value="P:positive regulation of stress-activated MAPK cascade"/>
    <property type="evidence" value="ECO:0007669"/>
    <property type="project" value="Ensembl"/>
</dbReference>
<dbReference type="GO" id="GO:0045627">
    <property type="term" value="P:positive regulation of T-helper 1 cell differentiation"/>
    <property type="evidence" value="ECO:0007669"/>
    <property type="project" value="Ensembl"/>
</dbReference>
<dbReference type="GO" id="GO:0002827">
    <property type="term" value="P:positive regulation of T-helper 1 type immune response"/>
    <property type="evidence" value="ECO:0007669"/>
    <property type="project" value="Ensembl"/>
</dbReference>
<dbReference type="GO" id="GO:0032760">
    <property type="term" value="P:positive regulation of tumor necrosis factor production"/>
    <property type="evidence" value="ECO:0000250"/>
    <property type="project" value="UniProtKB"/>
</dbReference>
<dbReference type="GO" id="GO:0032729">
    <property type="term" value="P:positive regulation of type II interferon production"/>
    <property type="evidence" value="ECO:0007669"/>
    <property type="project" value="Ensembl"/>
</dbReference>
<dbReference type="GO" id="GO:1904417">
    <property type="term" value="P:positive regulation of xenophagy"/>
    <property type="evidence" value="ECO:0007669"/>
    <property type="project" value="Ensembl"/>
</dbReference>
<dbReference type="GO" id="GO:0051260">
    <property type="term" value="P:protein homooligomerization"/>
    <property type="evidence" value="ECO:0007669"/>
    <property type="project" value="Ensembl"/>
</dbReference>
<dbReference type="GO" id="GO:0043330">
    <property type="term" value="P:response to exogenous dsRNA"/>
    <property type="evidence" value="ECO:0007669"/>
    <property type="project" value="Ensembl"/>
</dbReference>
<dbReference type="GO" id="GO:0070555">
    <property type="term" value="P:response to interleukin-1"/>
    <property type="evidence" value="ECO:0007669"/>
    <property type="project" value="Ensembl"/>
</dbReference>
<dbReference type="GO" id="GO:0070671">
    <property type="term" value="P:response to interleukin-12"/>
    <property type="evidence" value="ECO:0007669"/>
    <property type="project" value="Ensembl"/>
</dbReference>
<dbReference type="GO" id="GO:0070673">
    <property type="term" value="P:response to interleukin-18"/>
    <property type="evidence" value="ECO:0007669"/>
    <property type="project" value="Ensembl"/>
</dbReference>
<dbReference type="GO" id="GO:0051403">
    <property type="term" value="P:stress-activated MAPK cascade"/>
    <property type="evidence" value="ECO:0007669"/>
    <property type="project" value="Ensembl"/>
</dbReference>
<dbReference type="GO" id="GO:0050852">
    <property type="term" value="P:T cell receptor signaling pathway"/>
    <property type="evidence" value="ECO:0000250"/>
    <property type="project" value="UniProtKB"/>
</dbReference>
<dbReference type="GO" id="GO:0034134">
    <property type="term" value="P:toll-like receptor 2 signaling pathway"/>
    <property type="evidence" value="ECO:0007669"/>
    <property type="project" value="Ensembl"/>
</dbReference>
<dbReference type="GO" id="GO:0034142">
    <property type="term" value="P:toll-like receptor 4 signaling pathway"/>
    <property type="evidence" value="ECO:0007669"/>
    <property type="project" value="Ensembl"/>
</dbReference>
<dbReference type="GO" id="GO:0098792">
    <property type="term" value="P:xenophagy"/>
    <property type="evidence" value="ECO:0007669"/>
    <property type="project" value="Ensembl"/>
</dbReference>
<dbReference type="CDD" id="cd08786">
    <property type="entry name" value="CARD_RIP2_CARD3"/>
    <property type="match status" value="1"/>
</dbReference>
<dbReference type="FunFam" id="1.10.510.10:FF:000288">
    <property type="entry name" value="Receptor-interacting serine/threonine-protein kinase 2"/>
    <property type="match status" value="1"/>
</dbReference>
<dbReference type="FunFam" id="1.10.533.10:FF:000037">
    <property type="entry name" value="Receptor-interacting serine/threonine-protein kinase 2"/>
    <property type="match status" value="1"/>
</dbReference>
<dbReference type="Gene3D" id="1.10.533.10">
    <property type="entry name" value="Death Domain, Fas"/>
    <property type="match status" value="1"/>
</dbReference>
<dbReference type="Gene3D" id="1.10.510.10">
    <property type="entry name" value="Transferase(Phosphotransferase) domain 1"/>
    <property type="match status" value="1"/>
</dbReference>
<dbReference type="InterPro" id="IPR001315">
    <property type="entry name" value="CARD"/>
</dbReference>
<dbReference type="InterPro" id="IPR042149">
    <property type="entry name" value="CARD_RIP2"/>
</dbReference>
<dbReference type="InterPro" id="IPR011029">
    <property type="entry name" value="DEATH-like_dom_sf"/>
</dbReference>
<dbReference type="InterPro" id="IPR011009">
    <property type="entry name" value="Kinase-like_dom_sf"/>
</dbReference>
<dbReference type="InterPro" id="IPR000719">
    <property type="entry name" value="Prot_kinase_dom"/>
</dbReference>
<dbReference type="InterPro" id="IPR017322">
    <property type="entry name" value="Rcpt-int_Ser/Thr_kinase-2"/>
</dbReference>
<dbReference type="InterPro" id="IPR008271">
    <property type="entry name" value="Ser/Thr_kinase_AS"/>
</dbReference>
<dbReference type="InterPro" id="IPR051681">
    <property type="entry name" value="Ser/Thr_Kinases-Pseudokinases"/>
</dbReference>
<dbReference type="PANTHER" id="PTHR44329:SF9">
    <property type="entry name" value="RECEPTOR-INTERACTING SERINE_THREONINE-PROTEIN KINASE 2"/>
    <property type="match status" value="1"/>
</dbReference>
<dbReference type="PANTHER" id="PTHR44329">
    <property type="entry name" value="SERINE/THREONINE-PROTEIN KINASE TNNI3K-RELATED"/>
    <property type="match status" value="1"/>
</dbReference>
<dbReference type="Pfam" id="PF00619">
    <property type="entry name" value="CARD"/>
    <property type="match status" value="1"/>
</dbReference>
<dbReference type="Pfam" id="PF00069">
    <property type="entry name" value="Pkinase"/>
    <property type="match status" value="1"/>
</dbReference>
<dbReference type="PIRSF" id="PIRSF037921">
    <property type="entry name" value="STPK_RIP2"/>
    <property type="match status" value="1"/>
</dbReference>
<dbReference type="SMART" id="SM00220">
    <property type="entry name" value="S_TKc"/>
    <property type="match status" value="1"/>
</dbReference>
<dbReference type="SUPFAM" id="SSF47986">
    <property type="entry name" value="DEATH domain"/>
    <property type="match status" value="1"/>
</dbReference>
<dbReference type="SUPFAM" id="SSF56112">
    <property type="entry name" value="Protein kinase-like (PK-like)"/>
    <property type="match status" value="1"/>
</dbReference>
<dbReference type="PROSITE" id="PS50209">
    <property type="entry name" value="CARD"/>
    <property type="match status" value="1"/>
</dbReference>
<dbReference type="PROSITE" id="PS50011">
    <property type="entry name" value="PROTEIN_KINASE_DOM"/>
    <property type="match status" value="1"/>
</dbReference>
<dbReference type="PROSITE" id="PS00108">
    <property type="entry name" value="PROTEIN_KINASE_ST"/>
    <property type="match status" value="1"/>
</dbReference>
<gene>
    <name type="primary">RIPK2</name>
</gene>
<sequence length="540" mass="61106">MSAEPVCSALPAIPYHKLADLRYLSRGASGTVSSARHADWRVQVAVKHLHIHSPLLDSERNDVLREAEILHKARFSYILPILGICNEPEFLGIVTEYMPNGSLNELLHRKIEYPDVPWPLRFRILHEIALGVNYLHNMNPPLLHHDLKTQNILLDNEFHVKIADFGLSKWRMMSLSQSRSSKSAPEGGTIVYMPPENYEPGQKARASVKHDIYSYAIIIWEVLSRKQPFEDVTNPLQIMYSVSQGHRPDTNEESLPFDIPHRALMISLIESGWAQNPDERPSFLKCLIELEPVLRTFEEITFLEAVIQLKKTKLQNASRTVHLSDKKKRELSPNIPVNSGPREESCGSSQLHKTSGSPGTSRSLSAPQDKDFLSAKTQDFSALHQCSVNHSRNSDFCVDCQVAFCDHRTAPCSLAIVNPLSAEGNSGRFQPGIAQQWIQSKREDIVSQMTEACLNQSLDALLSRDLIMKEDYELISTKPTRTSKVRQLLDTTDIQGEEFARVIVQKLKDNKQMGLQPYPEILVLSQSPSLNFFHNKSHKK</sequence>
<organism>
    <name type="scientific">Bos taurus</name>
    <name type="common">Bovine</name>
    <dbReference type="NCBI Taxonomy" id="9913"/>
    <lineage>
        <taxon>Eukaryota</taxon>
        <taxon>Metazoa</taxon>
        <taxon>Chordata</taxon>
        <taxon>Craniata</taxon>
        <taxon>Vertebrata</taxon>
        <taxon>Euteleostomi</taxon>
        <taxon>Mammalia</taxon>
        <taxon>Eutheria</taxon>
        <taxon>Laurasiatheria</taxon>
        <taxon>Artiodactyla</taxon>
        <taxon>Ruminantia</taxon>
        <taxon>Pecora</taxon>
        <taxon>Bovidae</taxon>
        <taxon>Bovinae</taxon>
        <taxon>Bos</taxon>
    </lineage>
</organism>
<feature type="chain" id="PRO_0000245586" description="Receptor-interacting serine/threonine-protein kinase 2">
    <location>
        <begin position="1"/>
        <end position="540"/>
    </location>
</feature>
<feature type="domain" description="Protein kinase" evidence="5">
    <location>
        <begin position="18"/>
        <end position="294"/>
    </location>
</feature>
<feature type="domain" description="CARD" evidence="4">
    <location>
        <begin position="432"/>
        <end position="524"/>
    </location>
</feature>
<feature type="region of interest" description="Helix alphaC" evidence="1">
    <location>
        <begin position="65"/>
        <end position="73"/>
    </location>
</feature>
<feature type="region of interest" description="Activation segment (AS)" evidence="1">
    <location>
        <begin position="167"/>
        <end position="193"/>
    </location>
</feature>
<feature type="region of interest" description="Disordered" evidence="7">
    <location>
        <begin position="318"/>
        <end position="367"/>
    </location>
</feature>
<feature type="compositionally biased region" description="Basic and acidic residues" evidence="7">
    <location>
        <begin position="322"/>
        <end position="331"/>
    </location>
</feature>
<feature type="compositionally biased region" description="Polar residues" evidence="7">
    <location>
        <begin position="346"/>
        <end position="366"/>
    </location>
</feature>
<feature type="active site" description="Proton acceptor">
    <location>
        <position position="146"/>
    </location>
</feature>
<feature type="binding site" evidence="5">
    <location>
        <begin position="24"/>
        <end position="32"/>
    </location>
    <ligand>
        <name>ATP</name>
        <dbReference type="ChEBI" id="CHEBI:30616"/>
    </ligand>
</feature>
<feature type="binding site" evidence="5">
    <location>
        <position position="47"/>
    </location>
    <ligand>
        <name>ATP</name>
        <dbReference type="ChEBI" id="CHEBI:30616"/>
    </ligand>
</feature>
<feature type="modified residue" description="Phosphoserine" evidence="1">
    <location>
        <position position="168"/>
    </location>
</feature>
<feature type="modified residue" description="Phosphoserine; alternate" evidence="1">
    <location>
        <position position="174"/>
    </location>
</feature>
<feature type="modified residue" description="Phosphoserine; by autocatalysis" evidence="1">
    <location>
        <position position="176"/>
    </location>
</feature>
<feature type="modified residue" description="Phosphoserine; alternate" evidence="1">
    <location>
        <position position="178"/>
    </location>
</feature>
<feature type="modified residue" description="Phosphoserine" evidence="1">
    <location>
        <position position="180"/>
    </location>
</feature>
<feature type="modified residue" description="Phosphoserine; alternate" evidence="1">
    <location>
        <position position="181"/>
    </location>
</feature>
<feature type="modified residue" description="Phosphoserine" evidence="1">
    <location>
        <position position="363"/>
    </location>
</feature>
<feature type="modified residue" description="Phosphoserine" evidence="1">
    <location>
        <position position="391"/>
    </location>
</feature>
<feature type="modified residue" description="Phosphotyrosine; by autocatalysis" evidence="1">
    <location>
        <position position="472"/>
    </location>
</feature>
<feature type="modified residue" description="Phosphoserine" evidence="1">
    <location>
        <position position="525"/>
    </location>
</feature>
<feature type="modified residue" description="Phosphoserine" evidence="1">
    <location>
        <position position="527"/>
    </location>
</feature>
<feature type="modified residue" description="Phosphoserine" evidence="1">
    <location>
        <position position="529"/>
    </location>
</feature>
<feature type="modified residue" description="Phosphoserine" evidence="1">
    <location>
        <position position="537"/>
    </location>
</feature>
<feature type="cross-link" description="Glycyl lysine isopeptide (Lys-Gly) (interchain with G-Cter in ubiquitin)" evidence="1">
    <location>
        <position position="209"/>
    </location>
</feature>
<feature type="cross-link" description="Glycyl lysine isopeptide (Lys-Gly) (interchain with G-Cter in ubiquitin)" evidence="1">
    <location>
        <position position="536"/>
    </location>
</feature>
<reference key="1">
    <citation type="submission" date="2005-08" db="EMBL/GenBank/DDBJ databases">
        <authorList>
            <consortium name="NIH - Mammalian Gene Collection (MGC) project"/>
        </authorList>
    </citation>
    <scope>NUCLEOTIDE SEQUENCE [LARGE SCALE MRNA]</scope>
    <source>
        <strain>Crossbred X Angus</strain>
        <tissue>Ileum</tissue>
    </source>
</reference>
<name>RIPK2_BOVIN</name>
<accession>Q3SZJ2</accession>
<comment type="function">
    <text evidence="1">Serine/threonine/tyrosine-protein kinase that plays an essential role in modulation of innate and adaptive immune responses. Acts as a key effector of NOD1 and NOD2 signaling pathways: upon activation by bacterial peptidoglycans, NOD1 and NOD2 oligomerize and recruit RIPK2 via CARD-CARD domains, leading to the formation of RIPK2 filaments. Once recruited, RIPK2 autophosphorylates and undergoes 'Lys-63'-linked polyubiquitination by E3 ubiquitin ligases XIAP, BIRC2 and BIRC3, as well as 'Met-1'-linked (linear) polyubiquitination by the LUBAC complex, becoming a scaffolding protein for downstream effectors. 'Met-1'-linked polyubiquitin chains attached to RIPK2 recruit IKBKG/NEMO, which undergoes 'Lys-63'-linked polyubiquitination in a RIPK2-dependent process. 'Lys-63'-linked polyubiquitin chains attached to RIPK2 serve as docking sites for TAB2 and TAB3 and mediate the recruitment of MAP3K7/TAK1 to IKBKG/NEMO, inducing subsequent activation of IKBKB/IKKB. In turn, NF-kappa-B is released from NF-kappa-B inhibitors and translocates into the nucleus where it activates the transcription of hundreds of genes involved in immune response, growth control, or protection against apoptosis. The protein kinase activity is dispensable for the NOD1 and NOD2 signaling pathways. Contributes to the tyrosine phosphorylation of the guanine exchange factor ARHGEF2 through Src tyrosine kinase leading to NF-kappa-B activation by NOD2. Also involved in adaptive immunity: plays a role during engagement of the T-cell receptor (TCR) in promoting BCL10 phosphorylation and subsequent NF-kappa-B activation. Plays a role in the inactivation of RHOA in response to NGFR signaling.</text>
</comment>
<comment type="catalytic activity">
    <reaction evidence="1">
        <text>L-seryl-[protein] + ATP = O-phospho-L-seryl-[protein] + ADP + H(+)</text>
        <dbReference type="Rhea" id="RHEA:17989"/>
        <dbReference type="Rhea" id="RHEA-COMP:9863"/>
        <dbReference type="Rhea" id="RHEA-COMP:11604"/>
        <dbReference type="ChEBI" id="CHEBI:15378"/>
        <dbReference type="ChEBI" id="CHEBI:29999"/>
        <dbReference type="ChEBI" id="CHEBI:30616"/>
        <dbReference type="ChEBI" id="CHEBI:83421"/>
        <dbReference type="ChEBI" id="CHEBI:456216"/>
        <dbReference type="EC" id="2.7.11.1"/>
    </reaction>
</comment>
<comment type="catalytic activity">
    <reaction evidence="1">
        <text>L-threonyl-[protein] + ATP = O-phospho-L-threonyl-[protein] + ADP + H(+)</text>
        <dbReference type="Rhea" id="RHEA:46608"/>
        <dbReference type="Rhea" id="RHEA-COMP:11060"/>
        <dbReference type="Rhea" id="RHEA-COMP:11605"/>
        <dbReference type="ChEBI" id="CHEBI:15378"/>
        <dbReference type="ChEBI" id="CHEBI:30013"/>
        <dbReference type="ChEBI" id="CHEBI:30616"/>
        <dbReference type="ChEBI" id="CHEBI:61977"/>
        <dbReference type="ChEBI" id="CHEBI:456216"/>
        <dbReference type="EC" id="2.7.11.1"/>
    </reaction>
</comment>
<comment type="catalytic activity">
    <reaction evidence="6">
        <text>L-tyrosyl-[protein] + ATP = O-phospho-L-tyrosyl-[protein] + ADP + H(+)</text>
        <dbReference type="Rhea" id="RHEA:10596"/>
        <dbReference type="Rhea" id="RHEA-COMP:10136"/>
        <dbReference type="Rhea" id="RHEA-COMP:20101"/>
        <dbReference type="ChEBI" id="CHEBI:15378"/>
        <dbReference type="ChEBI" id="CHEBI:30616"/>
        <dbReference type="ChEBI" id="CHEBI:46858"/>
        <dbReference type="ChEBI" id="CHEBI:61978"/>
        <dbReference type="ChEBI" id="CHEBI:456216"/>
        <dbReference type="EC" id="2.7.10.2"/>
    </reaction>
</comment>
<comment type="activity regulation">
    <text evidence="1">In the inactive state, the helix alphaC is packed against the helical, non-phosphorylated activation segment (AS). Upon activation, helix alphaC is displaced and the phosphorylated AS becomes disordered.</text>
</comment>
<comment type="subunit">
    <text evidence="1 3">Interacts (via CARD domain) with NOD2 (via CARD domain) (By similarity). Interacts (via CARD domain) with NOD1 (via CARD domain) (By similarity). Homooligomer; following interaction with NOD1 or NOD2, homooligomerizes via its CARD domain and forms long filaments named RIPosomes (By similarity). Found in a signaling complex consisting of at least ARHGEF2, NOD2 and RIPK2 (By similarity). Interacts with ARHGEF2; the interaction mediates tyrosine phosphorylation of RIPK2 by Src kinase CSK (By similarity). Interacts with MAP3K4; this interaction sequesters RIPK2 from the NOD2 signaling pathway (By similarity). Interacts with IKBKG/NEMO (By similarity). The polyubiquitinated protein interacts with MAP3K7/TAK1; interaction is indirect and is mediated by TAB2 and TAB3 that bind to polyubiquitin chains attached to RIPK2 (By similarity). Binds to CFLAR/CLARP and CASP1 via their CARD domains (By similarity). Binds to BIRC3/c-IAP1 and BIRC2/c-IAP2, TRAF1, TRAF2, TRAF5 and TRAF6 (By similarity). Interacts with NLRP10 (By similarity). Interacts with CARD9 (By similarity). Interacts with INAVA; the interaction takes place upon PRR stimulation (By similarity). Interacts (via CARD domain) with NGFR (via death domain) (By similarity). Interacts with IRGM; promoting RIPK2 degradation (By similarity).</text>
</comment>
<comment type="subcellular location">
    <subcellularLocation>
        <location evidence="1">Cytoplasm</location>
    </subcellularLocation>
    <subcellularLocation>
        <location evidence="1">Cell membrane</location>
        <topology evidence="1">Peripheral membrane protein</topology>
    </subcellularLocation>
    <subcellularLocation>
        <location evidence="1">Endoplasmic reticulum</location>
    </subcellularLocation>
    <text evidence="1">Recruited to the cell membrane by NOD2 following stimulation by bacterial peptidoglycans.</text>
</comment>
<comment type="domain">
    <text evidence="2">Contains an N-terminal kinase domain and a C-terminal caspase activation and recruitment domain (CARD) that mediates the recruitment of CARD-containing proteins.</text>
</comment>
<comment type="PTM">
    <text evidence="1 3">Polyubiquitinated via both 'Lys-63'- and 'Met-1'-linked polyubiquitin following recruitment by NOD1 or NOD2, creating docking sites for downstream effectors, triggering activation of the NF-kappa-B and MAP kinases signaling. 'Lys-63'-linked polyubiquitination by XIAP is essential for NOD2 signaling and promotes recruitment of the LUBAC complex. Also polyubiquitinated with 'Lys-63'-linked chains by PELI3, BIRC2/c-IAP1 and BIRC3/c-IAP2. Ubiquitinated on Lys-209 via 'Lys-63'-linked by ITCH (By similarity). Undergoes 'Lys-63'-linked deubiquitination by MYSM1 to attenuate NOD2-mediated inflammation and tissue damage (By similarity). Polyubiquitinated with 'Lys-63'-linked chains in response to Shigella infection, promoting its SQSTM1/p62-dependent autophagic degradation. Undergoes 'Met-1'-linked polyubiquitination; the head-to-tail linear polyubiquitination is mediated by the LUBAC complex in response to NOD2 stimulation 'Met-1'-linked polyubiquitination. 'Lys-63'-linked polyubiquitination by XIAP is required for recruimtent of the LUBAC complex and subsequent. Linear polyubiquitination is restricted by FAM105B/otulin, probably to limit NOD2-dependent pro-inflammatory signaling activation of NF-kappa-B (By similarity).</text>
</comment>
<comment type="PTM">
    <text evidence="1">Autophosphorylated (By similarity). Phosphorylated at Ser-176, either via autophosphorylation or by LRRK2, enhancing activity (By similarity). Autophosphorylation at Tyr-472 is required for effective NOD2 signaling. Autophosphorylation is however not essential for NOD2 signaling (By similarity).</text>
</comment>
<comment type="PTM">
    <text evidence="1">Degraded via selective autophagy following interaction with IRGM. IRGM promotes NOD1/NOD2-RIPK2 RIPosome recruitment to autophagosome membranes. RIPK2 biquitinated via 'Lys-63'-linked chains is then recognized by SQSTM1/p62, leading to the SQSTM1/p62-dependent autophagic degradation of the NOD1/NOD2-RIPK2 RIPosome.</text>
</comment>
<comment type="similarity">
    <text evidence="8">Belongs to the protein kinase superfamily. TKL Ser/Thr protein kinase family.</text>
</comment>
<evidence type="ECO:0000250" key="1">
    <source>
        <dbReference type="UniProtKB" id="O43353"/>
    </source>
</evidence>
<evidence type="ECO:0000250" key="2">
    <source>
        <dbReference type="UniProtKB" id="P51617"/>
    </source>
</evidence>
<evidence type="ECO:0000250" key="3">
    <source>
        <dbReference type="UniProtKB" id="P58801"/>
    </source>
</evidence>
<evidence type="ECO:0000255" key="4">
    <source>
        <dbReference type="PROSITE-ProRule" id="PRU00046"/>
    </source>
</evidence>
<evidence type="ECO:0000255" key="5">
    <source>
        <dbReference type="PROSITE-ProRule" id="PRU00159"/>
    </source>
</evidence>
<evidence type="ECO:0000255" key="6">
    <source>
        <dbReference type="PROSITE-ProRule" id="PRU10027"/>
    </source>
</evidence>
<evidence type="ECO:0000256" key="7">
    <source>
        <dbReference type="SAM" id="MobiDB-lite"/>
    </source>
</evidence>
<evidence type="ECO:0000305" key="8"/>
<protein>
    <recommendedName>
        <fullName>Receptor-interacting serine/threonine-protein kinase 2</fullName>
        <ecNumber>2.7.11.1</ecNumber>
    </recommendedName>
    <alternativeName>
        <fullName>Tyrosine-protein kinase RIPK2</fullName>
        <ecNumber>2.7.10.2</ecNumber>
    </alternativeName>
</protein>
<proteinExistence type="evidence at transcript level"/>
<keyword id="KW-1064">Adaptive immunity</keyword>
<keyword id="KW-0053">Apoptosis</keyword>
<keyword id="KW-0067">ATP-binding</keyword>
<keyword id="KW-1003">Cell membrane</keyword>
<keyword id="KW-0963">Cytoplasm</keyword>
<keyword id="KW-0256">Endoplasmic reticulum</keyword>
<keyword id="KW-0391">Immunity</keyword>
<keyword id="KW-0399">Innate immunity</keyword>
<keyword id="KW-1017">Isopeptide bond</keyword>
<keyword id="KW-0418">Kinase</keyword>
<keyword id="KW-0472">Membrane</keyword>
<keyword id="KW-0547">Nucleotide-binding</keyword>
<keyword id="KW-0597">Phosphoprotein</keyword>
<keyword id="KW-1185">Reference proteome</keyword>
<keyword id="KW-0723">Serine/threonine-protein kinase</keyword>
<keyword id="KW-0808">Transferase</keyword>
<keyword id="KW-0832">Ubl conjugation</keyword>